<keyword id="KW-0002">3D-structure</keyword>
<keyword id="KW-1003">Cell membrane</keyword>
<keyword id="KW-0378">Hydrolase</keyword>
<keyword id="KW-0472">Membrane</keyword>
<keyword id="KW-0645">Protease</keyword>
<keyword id="KW-1185">Reference proteome</keyword>
<keyword id="KW-0812">Transmembrane</keyword>
<keyword id="KW-1133">Transmembrane helix</keyword>
<proteinExistence type="evidence at protein level"/>
<organism evidence="6">
    <name type="scientific">Methanococcus maripaludis (strain DSM 14266 / JCM 13030 / NBRC 101832 / S2 / LL)</name>
    <dbReference type="NCBI Taxonomy" id="267377"/>
    <lineage>
        <taxon>Archaea</taxon>
        <taxon>Methanobacteriati</taxon>
        <taxon>Methanobacteriota</taxon>
        <taxon>Methanomada group</taxon>
        <taxon>Methanococci</taxon>
        <taxon>Methanococcales</taxon>
        <taxon>Methanococcaceae</taxon>
        <taxon>Methanococcus</taxon>
    </lineage>
</organism>
<protein>
    <recommendedName>
        <fullName evidence="4">CAAX prenyl protease 2</fullName>
        <ecNumber evidence="1">3.4.26.1</ecNumber>
    </recommendedName>
    <alternativeName>
        <fullName evidence="2">Intramembrane protease Rce1</fullName>
        <shortName evidence="2">IMP Rce1</shortName>
    </alternativeName>
    <alternativeName>
        <fullName evidence="4">Prenyl protein-specific endoprotease 2</fullName>
    </alternativeName>
    <alternativeName>
        <fullName evidence="2">Ras and a-factor-converting enzyme 1</fullName>
    </alternativeName>
</protein>
<accession>Q6LZY8</accession>
<gene>
    <name evidence="2" type="primary">rce1</name>
    <name evidence="5" type="ordered locus">MMP0485</name>
</gene>
<sequence>MISSYKYNPKLYFLSTFVVTYILWFTGAYLSFSSTYSGIYMLIMLPGLMAPFIISTILIAKSKNNELKKDFINRLFNLKLINLKTIPVVFLLMPAVILLSILLSIPFGGSISQFQFSGGFSFSTDFVPVLFLLLLAATFEELGWRGYAFDSLQSRYSLFKASILFGIFWSLWHFPLIFVNNSYQYEIFNQSIWYGLNFFLSILPMGIIITWMCLKNRKSIILAIIFHFLINLNQELLAITQDTKIIETGVLFLVAAAIILYDKKMFFEKLG</sequence>
<name>RCE1_METMP</name>
<reference evidence="5 6" key="1">
    <citation type="journal article" date="2004" name="J. Bacteriol.">
        <title>Complete genome sequence of the genetically tractable hydrogenotrophic methanogen Methanococcus maripaludis.</title>
        <authorList>
            <person name="Hendrickson E.L."/>
            <person name="Kaul R."/>
            <person name="Zhou Y."/>
            <person name="Bovee D."/>
            <person name="Chapman P."/>
            <person name="Chung J."/>
            <person name="Conway de Macario E."/>
            <person name="Dodsworth J.A."/>
            <person name="Gillett W."/>
            <person name="Graham D.E."/>
            <person name="Hackett M."/>
            <person name="Haydock A.K."/>
            <person name="Kang A."/>
            <person name="Land M.L."/>
            <person name="Levy R."/>
            <person name="Lie T.J."/>
            <person name="Major T.A."/>
            <person name="Moore B.C."/>
            <person name="Porat I."/>
            <person name="Palmeiri A."/>
            <person name="Rouse G."/>
            <person name="Saenphimmachak C."/>
            <person name="Soell D."/>
            <person name="Van Dien S."/>
            <person name="Wang T."/>
            <person name="Whitman W.B."/>
            <person name="Xia Q."/>
            <person name="Zhang Y."/>
            <person name="Larimer F.W."/>
            <person name="Olson M.V."/>
            <person name="Leigh J.A."/>
        </authorList>
    </citation>
    <scope>NUCLEOTIDE SEQUENCE [LARGE SCALE GENOMIC DNA]</scope>
    <source>
        <strain evidence="6">DSM 14266 / JCM 13030 / NBRC 101832 / S2 / LL</strain>
    </source>
</reference>
<reference evidence="7" key="2">
    <citation type="journal article" date="2013" name="Nature">
        <title>Mechanism of farnesylated CAAX protein processing by the intramembrane protease Rce1.</title>
        <authorList>
            <person name="Manolaridis I."/>
            <person name="Kulkarni K."/>
            <person name="Dodd R.B."/>
            <person name="Ogasawara S."/>
            <person name="Zhang Z."/>
            <person name="Bineva G."/>
            <person name="O'Reilly N."/>
            <person name="Hanrahan S.J."/>
            <person name="Thompson A.J."/>
            <person name="Cronin N."/>
            <person name="Iwata S."/>
            <person name="Barford D."/>
        </authorList>
    </citation>
    <scope>X-RAY CRYSTALLOGRAPHY (2.50 ANGSTROMS) IN COMPLEX WITH MONOCLONAL ANTIBODY FAB FRAGMENT</scope>
    <scope>FUNCTION</scope>
    <scope>CATALYTIC ACTIVITY</scope>
    <scope>ACTIVITY REGULATION</scope>
    <scope>BIOPHYSICOCHEMICAL PROPERTIES</scope>
    <scope>SUBCELLULAR LOCATION</scope>
    <scope>TOPOLOGY</scope>
    <scope>CIRCULAR DICHROISM ANALYSIS</scope>
    <scope>REACTION MECHANISM</scope>
    <scope>ACTIVE SITES</scope>
    <scope>SITES</scope>
    <scope>MUTAGENESIS OF LEU-45; LEU-132; GLU-140; GLU-141; HIS-173; HIS-227 AND ASN-231</scope>
</reference>
<dbReference type="EC" id="3.4.26.1" evidence="1"/>
<dbReference type="EMBL" id="BX950229">
    <property type="protein sequence ID" value="CAF30041.1"/>
    <property type="molecule type" value="Genomic_DNA"/>
</dbReference>
<dbReference type="RefSeq" id="WP_011170429.1">
    <property type="nucleotide sequence ID" value="NC_005791.1"/>
</dbReference>
<dbReference type="PDB" id="4CAD">
    <property type="method" value="X-ray"/>
    <property type="resolution" value="2.50 A"/>
    <property type="chains" value="C/F/I/L=1-271"/>
</dbReference>
<dbReference type="PDBsum" id="4CAD"/>
<dbReference type="SMR" id="Q6LZY8"/>
<dbReference type="STRING" id="267377.MMP0485"/>
<dbReference type="MEROPS" id="G05.004"/>
<dbReference type="ABCD" id="Q6LZY8">
    <property type="antibodies" value="1 sequenced antibody"/>
</dbReference>
<dbReference type="EnsemblBacteria" id="CAF30041">
    <property type="protein sequence ID" value="CAF30041"/>
    <property type="gene ID" value="MMP0485"/>
</dbReference>
<dbReference type="GeneID" id="2761751"/>
<dbReference type="KEGG" id="mmp:MMP0485"/>
<dbReference type="PATRIC" id="fig|267377.15.peg.491"/>
<dbReference type="eggNOG" id="arCOG02768">
    <property type="taxonomic scope" value="Archaea"/>
</dbReference>
<dbReference type="HOGENOM" id="CLU_064706_2_0_2"/>
<dbReference type="OrthoDB" id="28575at2157"/>
<dbReference type="EvolutionaryTrace" id="Q6LZY8"/>
<dbReference type="Proteomes" id="UP000000590">
    <property type="component" value="Chromosome"/>
</dbReference>
<dbReference type="GO" id="GO:0016020">
    <property type="term" value="C:membrane"/>
    <property type="evidence" value="ECO:0000314"/>
    <property type="project" value="UniProtKB"/>
</dbReference>
<dbReference type="GO" id="GO:0005886">
    <property type="term" value="C:plasma membrane"/>
    <property type="evidence" value="ECO:0000314"/>
    <property type="project" value="UniProtKB"/>
</dbReference>
<dbReference type="GO" id="GO:0004175">
    <property type="term" value="F:endopeptidase activity"/>
    <property type="evidence" value="ECO:0000314"/>
    <property type="project" value="UniProtKB"/>
</dbReference>
<dbReference type="GO" id="GO:0008233">
    <property type="term" value="F:peptidase activity"/>
    <property type="evidence" value="ECO:0000314"/>
    <property type="project" value="UniProtKB"/>
</dbReference>
<dbReference type="GO" id="GO:0071586">
    <property type="term" value="P:CAAX-box protein processing"/>
    <property type="evidence" value="ECO:0000314"/>
    <property type="project" value="UniProtKB"/>
</dbReference>
<dbReference type="GO" id="GO:0006508">
    <property type="term" value="P:proteolysis"/>
    <property type="evidence" value="ECO:0000314"/>
    <property type="project" value="UniProtKB"/>
</dbReference>
<dbReference type="InterPro" id="IPR042150">
    <property type="entry name" value="MmRce1-like"/>
</dbReference>
<dbReference type="InterPro" id="IPR003675">
    <property type="entry name" value="Rce1/LyrA-like_dom"/>
</dbReference>
<dbReference type="NCBIfam" id="NF041656">
    <property type="entry name" value="CPBP_MmRce1"/>
    <property type="match status" value="1"/>
</dbReference>
<dbReference type="PANTHER" id="PTHR35797:SF1">
    <property type="entry name" value="PROTEASE"/>
    <property type="match status" value="1"/>
</dbReference>
<dbReference type="PANTHER" id="PTHR35797">
    <property type="entry name" value="PROTEASE-RELATED"/>
    <property type="match status" value="1"/>
</dbReference>
<dbReference type="Pfam" id="PF02517">
    <property type="entry name" value="Rce1-like"/>
    <property type="match status" value="1"/>
</dbReference>
<comment type="function">
    <text evidence="1">Protease involved in the processing of a variety of prenylated proteins containing the C-terminal CAAX motif, where C is a cysteine modified with an isoprenoid lipid, A is an aliphatic amino acid and X is any C-terminal amino acid. Proteolytically removes the C-terminal three residues of farnesylated proteins, leaving the prenylated cysteine as the new C-terminus. Hydrolysis depends on a farnesylated cysteine residue and no activity is shown towards geranylgeranylated peptides.</text>
</comment>
<comment type="catalytic activity">
    <reaction evidence="1">
        <text>Hydrolyzes the peptide bond -P2-(S-farnesyl or geranylgeranyl)C-P1'-P2'-P3'-COOH where P1' and P2' are amino acids with aliphatic sidechains and P3' is any C-terminal residue.</text>
        <dbReference type="EC" id="3.4.26.1"/>
    </reaction>
</comment>
<comment type="activity regulation">
    <text evidence="1">Activity is unaffected by metalloprotease inhibitors 5 mM EDTA and 5 mM Zn(2+). Activity partially inhibited by 1,10-phenanthroline and 1,7-phenanthroline.</text>
</comment>
<comment type="biophysicochemical properties">
    <kinetics>
        <KM evidence="1">19.7 uM for peptide substrate DABCYL-ARSGAKASGC(farnesyl)LVS-EDANS where EDANS is 5-[(2-aminoethyl)amino]naphthalene-1-sulphonic acid fluorophore and DABCYL is 4-{[4-(dimethylamino)phenyl]azo}benzoic acid quencher</KM>
        <text evidence="1">kcat is 0.175 sec(-1) for peptide substrate DABCYL-ARSGAKASGC(farnesyl)LVS-EDANS.</text>
    </kinetics>
</comment>
<comment type="subcellular location">
    <subcellularLocation>
        <location evidence="1">Cell membrane</location>
        <topology evidence="1">Multi-pass membrane protein</topology>
    </subcellularLocation>
</comment>
<comment type="similarity">
    <text evidence="3">Belongs to the peptidase U48 family.</text>
</comment>
<feature type="chain" id="PRO_0000433642" description="CAAX prenyl protease 2">
    <location>
        <begin position="1"/>
        <end position="271"/>
    </location>
</feature>
<feature type="topological domain" description="Extracellular" evidence="1">
    <location>
        <begin position="1"/>
        <end position="9"/>
    </location>
</feature>
<feature type="transmembrane region" description="Helical; Name=1" evidence="1">
    <location>
        <begin position="10"/>
        <end position="30"/>
    </location>
</feature>
<feature type="topological domain" description="Cytoplasmic" evidence="1">
    <location>
        <begin position="31"/>
        <end position="38"/>
    </location>
</feature>
<feature type="transmembrane region" description="Helical; Name=2" evidence="1">
    <location>
        <begin position="39"/>
        <end position="59"/>
    </location>
</feature>
<feature type="topological domain" description="Extracellular" evidence="1">
    <location>
        <begin position="60"/>
        <end position="82"/>
    </location>
</feature>
<feature type="transmembrane region" description="Helical; Name=3" evidence="1">
    <location>
        <begin position="83"/>
        <end position="105"/>
    </location>
</feature>
<feature type="topological domain" description="Cytoplasmic" evidence="1">
    <location>
        <begin position="106"/>
        <end position="125"/>
    </location>
</feature>
<feature type="transmembrane region" description="Helical; Name=4" evidence="1">
    <location>
        <begin position="126"/>
        <end position="149"/>
    </location>
</feature>
<feature type="topological domain" description="Extracellular" evidence="1">
    <location>
        <begin position="150"/>
        <end position="159"/>
    </location>
</feature>
<feature type="transmembrane region" description="Helical; Name=5" evidence="1">
    <location>
        <begin position="160"/>
        <end position="179"/>
    </location>
</feature>
<feature type="topological domain" description="Cytoplasmic" evidence="1">
    <location>
        <begin position="180"/>
        <end position="192"/>
    </location>
</feature>
<feature type="transmembrane region" description="Helical; Name=6" evidence="1">
    <location>
        <begin position="193"/>
        <end position="213"/>
    </location>
</feature>
<feature type="topological domain" description="Extracellular" evidence="1">
    <location>
        <begin position="214"/>
        <end position="219"/>
    </location>
</feature>
<feature type="transmembrane region" description="Helical; Name=7" evidence="1">
    <location>
        <begin position="220"/>
        <end position="237"/>
    </location>
</feature>
<feature type="topological domain" description="Cytoplasmic" evidence="1">
    <location>
        <begin position="238"/>
        <end position="243"/>
    </location>
</feature>
<feature type="transmembrane region" description="Helical; Name=8" evidence="1">
    <location>
        <begin position="244"/>
        <end position="263"/>
    </location>
</feature>
<feature type="topological domain" description="Extracellular" evidence="1">
    <location>
        <begin position="264"/>
        <end position="271"/>
    </location>
</feature>
<feature type="active site" description="Proton donor/acceptor" evidence="1">
    <location>
        <position position="140"/>
    </location>
</feature>
<feature type="active site" description="Proton donor/acceptor" evidence="1">
    <location>
        <position position="173"/>
    </location>
</feature>
<feature type="site" description="Transition state stabilizer" evidence="1">
    <location>
        <position position="227"/>
    </location>
</feature>
<feature type="site" description="Transition state stabilizer" evidence="1">
    <location>
        <position position="231"/>
    </location>
</feature>
<feature type="mutagenesis site" description="Decreased enzymatic activity to about 25 percent relative to wild-type." evidence="1">
    <original>L</original>
    <variation>W</variation>
    <location>
        <position position="45"/>
    </location>
</feature>
<feature type="mutagenesis site" description="Decreased enzymatic activity to about 20 percent relative to wild-type." evidence="1">
    <original>L</original>
    <variation>W</variation>
    <location>
        <position position="132"/>
    </location>
</feature>
<feature type="mutagenesis site" description="Nearly loss of enzymatic activity." evidence="1">
    <original>E</original>
    <variation>A</variation>
    <variation>Q</variation>
    <location>
        <position position="140"/>
    </location>
</feature>
<feature type="mutagenesis site" description="Decreased enzymatic activity to about 15 percent relative to wild-type." evidence="1">
    <original>E</original>
    <variation>A</variation>
    <location>
        <position position="141"/>
    </location>
</feature>
<feature type="mutagenesis site" description="Strongly decreased enzymatic activity." evidence="1">
    <original>H</original>
    <variation>A</variation>
    <location>
        <position position="173"/>
    </location>
</feature>
<feature type="mutagenesis site" description="Decreased enzymatic activity to about 20 percent relative to wild-type." evidence="1">
    <original>H</original>
    <variation>A</variation>
    <location>
        <position position="227"/>
    </location>
</feature>
<feature type="mutagenesis site" description="Nearly loss of enzymatic activity." evidence="1">
    <original>N</original>
    <variation>A</variation>
    <location>
        <position position="231"/>
    </location>
</feature>
<feature type="mutagenesis site" description="Decreased enzymatic activity to 40 percent relative to wild-type. At higher pH 8.0 nearly loss of enzymatic activity whereas the activity of the wild-type is unchanged." evidence="1">
    <original>N</original>
    <variation>D</variation>
    <location>
        <position position="231"/>
    </location>
</feature>
<feature type="helix" evidence="8">
    <location>
        <begin position="9"/>
        <end position="30"/>
    </location>
</feature>
<feature type="turn" evidence="8">
    <location>
        <begin position="34"/>
        <end position="36"/>
    </location>
</feature>
<feature type="helix" evidence="8">
    <location>
        <begin position="37"/>
        <end position="40"/>
    </location>
</feature>
<feature type="helix" evidence="8">
    <location>
        <begin position="41"/>
        <end position="60"/>
    </location>
</feature>
<feature type="helix" evidence="8">
    <location>
        <begin position="69"/>
        <end position="76"/>
    </location>
</feature>
<feature type="helix" evidence="8">
    <location>
        <begin position="78"/>
        <end position="80"/>
    </location>
</feature>
<feature type="helix" evidence="8">
    <location>
        <begin position="83"/>
        <end position="85"/>
    </location>
</feature>
<feature type="helix" evidence="8">
    <location>
        <begin position="86"/>
        <end position="104"/>
    </location>
</feature>
<feature type="helix" evidence="8">
    <location>
        <begin position="113"/>
        <end position="115"/>
    </location>
</feature>
<feature type="helix" evidence="8">
    <location>
        <begin position="126"/>
        <end position="144"/>
    </location>
</feature>
<feature type="helix" evidence="8">
    <location>
        <begin position="147"/>
        <end position="155"/>
    </location>
</feature>
<feature type="helix" evidence="8">
    <location>
        <begin position="158"/>
        <end position="172"/>
    </location>
</feature>
<feature type="helix" evidence="8">
    <location>
        <begin position="174"/>
        <end position="178"/>
    </location>
</feature>
<feature type="helix" evidence="8">
    <location>
        <begin position="183"/>
        <end position="190"/>
    </location>
</feature>
<feature type="helix" evidence="8">
    <location>
        <begin position="192"/>
        <end position="215"/>
    </location>
</feature>
<feature type="turn" evidence="8">
    <location>
        <begin position="216"/>
        <end position="218"/>
    </location>
</feature>
<feature type="helix" evidence="8">
    <location>
        <begin position="220"/>
        <end position="236"/>
    </location>
</feature>
<feature type="helix" evidence="8">
    <location>
        <begin position="241"/>
        <end position="261"/>
    </location>
</feature>
<feature type="helix" evidence="8">
    <location>
        <begin position="263"/>
        <end position="267"/>
    </location>
</feature>
<evidence type="ECO:0000269" key="1">
    <source>
    </source>
</evidence>
<evidence type="ECO:0000303" key="2">
    <source>
    </source>
</evidence>
<evidence type="ECO:0000305" key="3"/>
<evidence type="ECO:0000305" key="4">
    <source>
    </source>
</evidence>
<evidence type="ECO:0000312" key="5">
    <source>
        <dbReference type="EMBL" id="CAF30041.1"/>
    </source>
</evidence>
<evidence type="ECO:0000312" key="6">
    <source>
        <dbReference type="Proteomes" id="UP000000590"/>
    </source>
</evidence>
<evidence type="ECO:0007744" key="7">
    <source>
        <dbReference type="PDB" id="4CAD"/>
    </source>
</evidence>
<evidence type="ECO:0007829" key="8">
    <source>
        <dbReference type="PDB" id="4CAD"/>
    </source>
</evidence>